<dbReference type="EMBL" id="AC026234">
    <property type="protein sequence ID" value="AAF88153.1"/>
    <property type="status" value="ALT_SEQ"/>
    <property type="molecule type" value="Genomic_DNA"/>
</dbReference>
<dbReference type="EMBL" id="CP002684">
    <property type="protein sequence ID" value="AEE29965.1"/>
    <property type="molecule type" value="Genomic_DNA"/>
</dbReference>
<dbReference type="EMBL" id="BT004069">
    <property type="protein sequence ID" value="AAO42096.1"/>
    <property type="molecule type" value="mRNA"/>
</dbReference>
<dbReference type="EMBL" id="BT004949">
    <property type="protein sequence ID" value="AAO50482.1"/>
    <property type="molecule type" value="mRNA"/>
</dbReference>
<dbReference type="PIR" id="D86337">
    <property type="entry name" value="D86337"/>
</dbReference>
<dbReference type="RefSeq" id="NP_173461.2">
    <property type="nucleotide sequence ID" value="NM_101887.2"/>
</dbReference>
<dbReference type="SMR" id="Q84JN6"/>
<dbReference type="BioGRID" id="23863">
    <property type="interactions" value="1"/>
</dbReference>
<dbReference type="IntAct" id="Q84JN6">
    <property type="interactions" value="1"/>
</dbReference>
<dbReference type="iPTMnet" id="Q84JN6"/>
<dbReference type="PaxDb" id="3702-AT1G20360.1"/>
<dbReference type="EnsemblPlants" id="AT1G20360.1">
    <property type="protein sequence ID" value="AT1G20360.1"/>
    <property type="gene ID" value="AT1G20360"/>
</dbReference>
<dbReference type="GeneID" id="838624"/>
<dbReference type="Gramene" id="AT1G20360.1">
    <property type="protein sequence ID" value="AT1G20360.1"/>
    <property type="gene ID" value="AT1G20360"/>
</dbReference>
<dbReference type="KEGG" id="ath:AT1G20360"/>
<dbReference type="Araport" id="AT1G20360"/>
<dbReference type="TAIR" id="AT1G20360"/>
<dbReference type="HOGENOM" id="CLU_061894_0_0_1"/>
<dbReference type="InParanoid" id="Q84JN6"/>
<dbReference type="OMA" id="SELEYWN"/>
<dbReference type="PhylomeDB" id="Q84JN6"/>
<dbReference type="PRO" id="PR:Q84JN6"/>
<dbReference type="Proteomes" id="UP000006548">
    <property type="component" value="Chromosome 1"/>
</dbReference>
<dbReference type="ExpressionAtlas" id="Q84JN6">
    <property type="expression patterns" value="baseline and differential"/>
</dbReference>
<dbReference type="InterPro" id="IPR036047">
    <property type="entry name" value="F-box-like_dom_sf"/>
</dbReference>
<dbReference type="InterPro" id="IPR001810">
    <property type="entry name" value="F-box_dom"/>
</dbReference>
<dbReference type="InterPro" id="IPR050796">
    <property type="entry name" value="SCF_F-box_component"/>
</dbReference>
<dbReference type="PANTHER" id="PTHR31672">
    <property type="entry name" value="BNACNNG10540D PROTEIN"/>
    <property type="match status" value="1"/>
</dbReference>
<dbReference type="PANTHER" id="PTHR31672:SF13">
    <property type="entry name" value="F-BOX PROTEIN CPR30-LIKE"/>
    <property type="match status" value="1"/>
</dbReference>
<dbReference type="Pfam" id="PF00646">
    <property type="entry name" value="F-box"/>
    <property type="match status" value="1"/>
</dbReference>
<dbReference type="SUPFAM" id="SSF81383">
    <property type="entry name" value="F-box domain"/>
    <property type="match status" value="1"/>
</dbReference>
<dbReference type="PROSITE" id="PS50181">
    <property type="entry name" value="FBOX"/>
    <property type="match status" value="1"/>
</dbReference>
<organism>
    <name type="scientific">Arabidopsis thaliana</name>
    <name type="common">Mouse-ear cress</name>
    <dbReference type="NCBI Taxonomy" id="3702"/>
    <lineage>
        <taxon>Eukaryota</taxon>
        <taxon>Viridiplantae</taxon>
        <taxon>Streptophyta</taxon>
        <taxon>Embryophyta</taxon>
        <taxon>Tracheophyta</taxon>
        <taxon>Spermatophyta</taxon>
        <taxon>Magnoliopsida</taxon>
        <taxon>eudicotyledons</taxon>
        <taxon>Gunneridae</taxon>
        <taxon>Pentapetalae</taxon>
        <taxon>rosids</taxon>
        <taxon>malvids</taxon>
        <taxon>Brassicales</taxon>
        <taxon>Brassicaceae</taxon>
        <taxon>Camelineae</taxon>
        <taxon>Arabidopsis</taxon>
    </lineage>
</organism>
<evidence type="ECO:0000255" key="1">
    <source>
        <dbReference type="PROSITE-ProRule" id="PRU00080"/>
    </source>
</evidence>
<evidence type="ECO:0000305" key="2"/>
<comment type="sequence caution" evidence="2">
    <conflict type="erroneous gene model prediction">
        <sequence resource="EMBL-CDS" id="AAF88153"/>
    </conflict>
</comment>
<accession>Q84JN6</accession>
<accession>Q9LN28</accession>
<reference key="1">
    <citation type="journal article" date="2000" name="Nature">
        <title>Sequence and analysis of chromosome 1 of the plant Arabidopsis thaliana.</title>
        <authorList>
            <person name="Theologis A."/>
            <person name="Ecker J.R."/>
            <person name="Palm C.J."/>
            <person name="Federspiel N.A."/>
            <person name="Kaul S."/>
            <person name="White O."/>
            <person name="Alonso J."/>
            <person name="Altafi H."/>
            <person name="Araujo R."/>
            <person name="Bowman C.L."/>
            <person name="Brooks S.Y."/>
            <person name="Buehler E."/>
            <person name="Chan A."/>
            <person name="Chao Q."/>
            <person name="Chen H."/>
            <person name="Cheuk R.F."/>
            <person name="Chin C.W."/>
            <person name="Chung M.K."/>
            <person name="Conn L."/>
            <person name="Conway A.B."/>
            <person name="Conway A.R."/>
            <person name="Creasy T.H."/>
            <person name="Dewar K."/>
            <person name="Dunn P."/>
            <person name="Etgu P."/>
            <person name="Feldblyum T.V."/>
            <person name="Feng J.-D."/>
            <person name="Fong B."/>
            <person name="Fujii C.Y."/>
            <person name="Gill J.E."/>
            <person name="Goldsmith A.D."/>
            <person name="Haas B."/>
            <person name="Hansen N.F."/>
            <person name="Hughes B."/>
            <person name="Huizar L."/>
            <person name="Hunter J.L."/>
            <person name="Jenkins J."/>
            <person name="Johnson-Hopson C."/>
            <person name="Khan S."/>
            <person name="Khaykin E."/>
            <person name="Kim C.J."/>
            <person name="Koo H.L."/>
            <person name="Kremenetskaia I."/>
            <person name="Kurtz D.B."/>
            <person name="Kwan A."/>
            <person name="Lam B."/>
            <person name="Langin-Hooper S."/>
            <person name="Lee A."/>
            <person name="Lee J.M."/>
            <person name="Lenz C.A."/>
            <person name="Li J.H."/>
            <person name="Li Y.-P."/>
            <person name="Lin X."/>
            <person name="Liu S.X."/>
            <person name="Liu Z.A."/>
            <person name="Luros J.S."/>
            <person name="Maiti R."/>
            <person name="Marziali A."/>
            <person name="Militscher J."/>
            <person name="Miranda M."/>
            <person name="Nguyen M."/>
            <person name="Nierman W.C."/>
            <person name="Osborne B.I."/>
            <person name="Pai G."/>
            <person name="Peterson J."/>
            <person name="Pham P.K."/>
            <person name="Rizzo M."/>
            <person name="Rooney T."/>
            <person name="Rowley D."/>
            <person name="Sakano H."/>
            <person name="Salzberg S.L."/>
            <person name="Schwartz J.R."/>
            <person name="Shinn P."/>
            <person name="Southwick A.M."/>
            <person name="Sun H."/>
            <person name="Tallon L.J."/>
            <person name="Tambunga G."/>
            <person name="Toriumi M.J."/>
            <person name="Town C.D."/>
            <person name="Utterback T."/>
            <person name="Van Aken S."/>
            <person name="Vaysberg M."/>
            <person name="Vysotskaia V.S."/>
            <person name="Walker M."/>
            <person name="Wu D."/>
            <person name="Yu G."/>
            <person name="Fraser C.M."/>
            <person name="Venter J.C."/>
            <person name="Davis R.W."/>
        </authorList>
    </citation>
    <scope>NUCLEOTIDE SEQUENCE [LARGE SCALE GENOMIC DNA]</scope>
    <source>
        <strain>cv. Columbia</strain>
    </source>
</reference>
<reference key="2">
    <citation type="journal article" date="2017" name="Plant J.">
        <title>Araport11: a complete reannotation of the Arabidopsis thaliana reference genome.</title>
        <authorList>
            <person name="Cheng C.Y."/>
            <person name="Krishnakumar V."/>
            <person name="Chan A.P."/>
            <person name="Thibaud-Nissen F."/>
            <person name="Schobel S."/>
            <person name="Town C.D."/>
        </authorList>
    </citation>
    <scope>GENOME REANNOTATION</scope>
    <source>
        <strain>cv. Columbia</strain>
    </source>
</reference>
<reference key="3">
    <citation type="journal article" date="2003" name="Science">
        <title>Empirical analysis of transcriptional activity in the Arabidopsis genome.</title>
        <authorList>
            <person name="Yamada K."/>
            <person name="Lim J."/>
            <person name="Dale J.M."/>
            <person name="Chen H."/>
            <person name="Shinn P."/>
            <person name="Palm C.J."/>
            <person name="Southwick A.M."/>
            <person name="Wu H.C."/>
            <person name="Kim C.J."/>
            <person name="Nguyen M."/>
            <person name="Pham P.K."/>
            <person name="Cheuk R.F."/>
            <person name="Karlin-Newmann G."/>
            <person name="Liu S.X."/>
            <person name="Lam B."/>
            <person name="Sakano H."/>
            <person name="Wu T."/>
            <person name="Yu G."/>
            <person name="Miranda M."/>
            <person name="Quach H.L."/>
            <person name="Tripp M."/>
            <person name="Chang C.H."/>
            <person name="Lee J.M."/>
            <person name="Toriumi M.J."/>
            <person name="Chan M.M."/>
            <person name="Tang C.C."/>
            <person name="Onodera C.S."/>
            <person name="Deng J.M."/>
            <person name="Akiyama K."/>
            <person name="Ansari Y."/>
            <person name="Arakawa T."/>
            <person name="Banh J."/>
            <person name="Banno F."/>
            <person name="Bowser L."/>
            <person name="Brooks S.Y."/>
            <person name="Carninci P."/>
            <person name="Chao Q."/>
            <person name="Choy N."/>
            <person name="Enju A."/>
            <person name="Goldsmith A.D."/>
            <person name="Gurjal M."/>
            <person name="Hansen N.F."/>
            <person name="Hayashizaki Y."/>
            <person name="Johnson-Hopson C."/>
            <person name="Hsuan V.W."/>
            <person name="Iida K."/>
            <person name="Karnes M."/>
            <person name="Khan S."/>
            <person name="Koesema E."/>
            <person name="Ishida J."/>
            <person name="Jiang P.X."/>
            <person name="Jones T."/>
            <person name="Kawai J."/>
            <person name="Kamiya A."/>
            <person name="Meyers C."/>
            <person name="Nakajima M."/>
            <person name="Narusaka M."/>
            <person name="Seki M."/>
            <person name="Sakurai T."/>
            <person name="Satou M."/>
            <person name="Tamse R."/>
            <person name="Vaysberg M."/>
            <person name="Wallender E.K."/>
            <person name="Wong C."/>
            <person name="Yamamura Y."/>
            <person name="Yuan S."/>
            <person name="Shinozaki K."/>
            <person name="Davis R.W."/>
            <person name="Theologis A."/>
            <person name="Ecker J.R."/>
        </authorList>
    </citation>
    <scope>NUCLEOTIDE SEQUENCE [LARGE SCALE MRNA]</scope>
    <source>
        <strain>cv. Columbia</strain>
    </source>
</reference>
<name>FB11_ARATH</name>
<protein>
    <recommendedName>
        <fullName>F-box protein At1g20360</fullName>
    </recommendedName>
</protein>
<gene>
    <name type="ordered locus">At1g20360</name>
    <name type="ORF">F14O10.4</name>
</gene>
<feature type="chain" id="PRO_0000283290" description="F-box protein At1g20360">
    <location>
        <begin position="1"/>
        <end position="302"/>
    </location>
</feature>
<feature type="domain" description="F-box" evidence="1">
    <location>
        <begin position="1"/>
        <end position="48"/>
    </location>
</feature>
<proteinExistence type="evidence at transcript level"/>
<keyword id="KW-1185">Reference proteome</keyword>
<sequence>MNSLPLHLLDQILFRLEPKSLAMMKSTNRTINSHISDPLFESEYFSRLESSLYNLSPGGARYVMCQPLVSSCKSMSMGEKAIQGNFRCYMLGSCSGLLLLYIGGLFVANPLTKRFRYLDPSGSKFIPTLSGDRWIYLAHPERAMCVGFAVDRKRFKIVCILEMETRYEFEINDGDSWRLSKTTINADSKSDLTKWMKPVYLEGTLHWLRNDGSIIAFNPETEQARLIPSGFHQEVPDMKLLLAADDKINRLTLISGTKQTISVYTLLGNLKWGLARRIKNVSLKENELNAGTWLCTMASVFW</sequence>